<proteinExistence type="inferred from homology"/>
<organism>
    <name type="scientific">Escherichia coli O6:K15:H31 (strain 536 / UPEC)</name>
    <dbReference type="NCBI Taxonomy" id="362663"/>
    <lineage>
        <taxon>Bacteria</taxon>
        <taxon>Pseudomonadati</taxon>
        <taxon>Pseudomonadota</taxon>
        <taxon>Gammaproteobacteria</taxon>
        <taxon>Enterobacterales</taxon>
        <taxon>Enterobacteriaceae</taxon>
        <taxon>Escherichia</taxon>
    </lineage>
</organism>
<reference key="1">
    <citation type="journal article" date="2006" name="Mol. Microbiol.">
        <title>Role of pathogenicity island-associated integrases in the genome plasticity of uropathogenic Escherichia coli strain 536.</title>
        <authorList>
            <person name="Hochhut B."/>
            <person name="Wilde C."/>
            <person name="Balling G."/>
            <person name="Middendorf B."/>
            <person name="Dobrindt U."/>
            <person name="Brzuszkiewicz E."/>
            <person name="Gottschalk G."/>
            <person name="Carniel E."/>
            <person name="Hacker J."/>
        </authorList>
    </citation>
    <scope>NUCLEOTIDE SEQUENCE [LARGE SCALE GENOMIC DNA]</scope>
    <source>
        <strain>536 / UPEC</strain>
    </source>
</reference>
<gene>
    <name evidence="1" type="primary">obg</name>
    <name type="ordered locus">ECP_3270</name>
</gene>
<sequence>MKFVDEASILVVAGDGGNGCVSFRREKYIPKGGPDGGDGGDGGDVWMEADENLNTLIDYRFEKSFRAERGQNGASRDCTGKRGKDVTIKVPVGTRVIDQGTGETMGDMTKHGQRLLVAKGGWHGLGNTRFKSSVNRTPRQKTNGTPGDKRELLLELMLLADVGMLGMPNAGKSTFIRAVSAAKPKVADYPFTTLVPSLGVVRMDNEKSFVVADIPGLIEGAAEGAGLGIRFLKHLERCRVLLHLIDIDPIDGTDPVENARIIISELEKYSQDLAAKPRWLVFNKIDLLDKVEAEEKAKAIAEALGWEDKYYLISAASGLGVKDLCWDVMTFIIENPVVQAEEAKQPEKVEFMWDDYHRQQLEEIAEEDDEDWDDDWDEDDEEGVEFIYKR</sequence>
<accession>Q0TCS7</accession>
<keyword id="KW-0963">Cytoplasm</keyword>
<keyword id="KW-0342">GTP-binding</keyword>
<keyword id="KW-0378">Hydrolase</keyword>
<keyword id="KW-0460">Magnesium</keyword>
<keyword id="KW-0479">Metal-binding</keyword>
<keyword id="KW-0547">Nucleotide-binding</keyword>
<evidence type="ECO:0000255" key="1">
    <source>
        <dbReference type="HAMAP-Rule" id="MF_01454"/>
    </source>
</evidence>
<evidence type="ECO:0000255" key="2">
    <source>
        <dbReference type="PROSITE-ProRule" id="PRU01231"/>
    </source>
</evidence>
<evidence type="ECO:0000256" key="3">
    <source>
        <dbReference type="SAM" id="MobiDB-lite"/>
    </source>
</evidence>
<name>OBG_ECOL5</name>
<comment type="function">
    <text evidence="1">An essential GTPase which binds GTP, GDP and possibly (p)ppGpp with moderate affinity, with high nucleotide exchange rates and a fairly low GTP hydrolysis rate. Plays a role in control of the cell cycle, stress response, ribosome biogenesis and in those bacteria that undergo differentiation, in morphogenesis control.</text>
</comment>
<comment type="cofactor">
    <cofactor evidence="1">
        <name>Mg(2+)</name>
        <dbReference type="ChEBI" id="CHEBI:18420"/>
    </cofactor>
</comment>
<comment type="subunit">
    <text evidence="1">Monomer.</text>
</comment>
<comment type="subcellular location">
    <subcellularLocation>
        <location evidence="1">Cytoplasm</location>
    </subcellularLocation>
</comment>
<comment type="similarity">
    <text evidence="1">Belongs to the TRAFAC class OBG-HflX-like GTPase superfamily. OBG GTPase family.</text>
</comment>
<feature type="chain" id="PRO_0000385924" description="GTPase Obg">
    <location>
        <begin position="1"/>
        <end position="390"/>
    </location>
</feature>
<feature type="domain" description="Obg" evidence="2">
    <location>
        <begin position="1"/>
        <end position="159"/>
    </location>
</feature>
<feature type="domain" description="OBG-type G" evidence="1">
    <location>
        <begin position="160"/>
        <end position="333"/>
    </location>
</feature>
<feature type="region of interest" description="Disordered" evidence="3">
    <location>
        <begin position="127"/>
        <end position="147"/>
    </location>
</feature>
<feature type="compositionally biased region" description="Polar residues" evidence="3">
    <location>
        <begin position="129"/>
        <end position="145"/>
    </location>
</feature>
<feature type="binding site" evidence="1">
    <location>
        <begin position="166"/>
        <end position="173"/>
    </location>
    <ligand>
        <name>GTP</name>
        <dbReference type="ChEBI" id="CHEBI:37565"/>
    </ligand>
</feature>
<feature type="binding site" evidence="1">
    <location>
        <position position="173"/>
    </location>
    <ligand>
        <name>Mg(2+)</name>
        <dbReference type="ChEBI" id="CHEBI:18420"/>
    </ligand>
</feature>
<feature type="binding site" evidence="1">
    <location>
        <begin position="191"/>
        <end position="195"/>
    </location>
    <ligand>
        <name>GTP</name>
        <dbReference type="ChEBI" id="CHEBI:37565"/>
    </ligand>
</feature>
<feature type="binding site" evidence="1">
    <location>
        <position position="193"/>
    </location>
    <ligand>
        <name>Mg(2+)</name>
        <dbReference type="ChEBI" id="CHEBI:18420"/>
    </ligand>
</feature>
<feature type="binding site" evidence="1">
    <location>
        <begin position="213"/>
        <end position="216"/>
    </location>
    <ligand>
        <name>GTP</name>
        <dbReference type="ChEBI" id="CHEBI:37565"/>
    </ligand>
</feature>
<feature type="binding site" evidence="1">
    <location>
        <begin position="283"/>
        <end position="286"/>
    </location>
    <ligand>
        <name>GTP</name>
        <dbReference type="ChEBI" id="CHEBI:37565"/>
    </ligand>
</feature>
<feature type="binding site" evidence="1">
    <location>
        <begin position="314"/>
        <end position="316"/>
    </location>
    <ligand>
        <name>GTP</name>
        <dbReference type="ChEBI" id="CHEBI:37565"/>
    </ligand>
</feature>
<protein>
    <recommendedName>
        <fullName evidence="1">GTPase Obg</fullName>
        <ecNumber evidence="1">3.6.5.-</ecNumber>
    </recommendedName>
    <alternativeName>
        <fullName evidence="1">GTP-binding protein Obg</fullName>
    </alternativeName>
</protein>
<dbReference type="EC" id="3.6.5.-" evidence="1"/>
<dbReference type="EMBL" id="CP000247">
    <property type="protein sequence ID" value="ABG71252.1"/>
    <property type="molecule type" value="Genomic_DNA"/>
</dbReference>
<dbReference type="SMR" id="Q0TCS7"/>
<dbReference type="KEGG" id="ecp:ECP_3270"/>
<dbReference type="HOGENOM" id="CLU_011747_2_0_6"/>
<dbReference type="Proteomes" id="UP000009182">
    <property type="component" value="Chromosome"/>
</dbReference>
<dbReference type="GO" id="GO:0005737">
    <property type="term" value="C:cytoplasm"/>
    <property type="evidence" value="ECO:0007669"/>
    <property type="project" value="UniProtKB-SubCell"/>
</dbReference>
<dbReference type="GO" id="GO:0005525">
    <property type="term" value="F:GTP binding"/>
    <property type="evidence" value="ECO:0007669"/>
    <property type="project" value="UniProtKB-UniRule"/>
</dbReference>
<dbReference type="GO" id="GO:0003924">
    <property type="term" value="F:GTPase activity"/>
    <property type="evidence" value="ECO:0007669"/>
    <property type="project" value="UniProtKB-UniRule"/>
</dbReference>
<dbReference type="GO" id="GO:0000287">
    <property type="term" value="F:magnesium ion binding"/>
    <property type="evidence" value="ECO:0007669"/>
    <property type="project" value="InterPro"/>
</dbReference>
<dbReference type="GO" id="GO:0042254">
    <property type="term" value="P:ribosome biogenesis"/>
    <property type="evidence" value="ECO:0007669"/>
    <property type="project" value="UniProtKB-UniRule"/>
</dbReference>
<dbReference type="CDD" id="cd01898">
    <property type="entry name" value="Obg"/>
    <property type="match status" value="1"/>
</dbReference>
<dbReference type="FunFam" id="2.70.210.12:FF:000001">
    <property type="entry name" value="GTPase Obg"/>
    <property type="match status" value="1"/>
</dbReference>
<dbReference type="FunFam" id="3.40.50.300:FF:000185">
    <property type="entry name" value="GTPase Obg"/>
    <property type="match status" value="1"/>
</dbReference>
<dbReference type="Gene3D" id="2.70.210.12">
    <property type="entry name" value="GTP1/OBG domain"/>
    <property type="match status" value="1"/>
</dbReference>
<dbReference type="Gene3D" id="3.40.50.300">
    <property type="entry name" value="P-loop containing nucleotide triphosphate hydrolases"/>
    <property type="match status" value="1"/>
</dbReference>
<dbReference type="HAMAP" id="MF_01454">
    <property type="entry name" value="GTPase_Obg"/>
    <property type="match status" value="1"/>
</dbReference>
<dbReference type="InterPro" id="IPR031167">
    <property type="entry name" value="G_OBG"/>
</dbReference>
<dbReference type="InterPro" id="IPR006073">
    <property type="entry name" value="GTP-bd"/>
</dbReference>
<dbReference type="InterPro" id="IPR014100">
    <property type="entry name" value="GTP-bd_Obg/CgtA"/>
</dbReference>
<dbReference type="InterPro" id="IPR006074">
    <property type="entry name" value="GTP1-OBG_CS"/>
</dbReference>
<dbReference type="InterPro" id="IPR006169">
    <property type="entry name" value="GTP1_OBG_dom"/>
</dbReference>
<dbReference type="InterPro" id="IPR036726">
    <property type="entry name" value="GTP1_OBG_dom_sf"/>
</dbReference>
<dbReference type="InterPro" id="IPR045086">
    <property type="entry name" value="OBG_GTPase"/>
</dbReference>
<dbReference type="InterPro" id="IPR027417">
    <property type="entry name" value="P-loop_NTPase"/>
</dbReference>
<dbReference type="NCBIfam" id="TIGR02729">
    <property type="entry name" value="Obg_CgtA"/>
    <property type="match status" value="1"/>
</dbReference>
<dbReference type="NCBIfam" id="NF008955">
    <property type="entry name" value="PRK12297.1"/>
    <property type="match status" value="1"/>
</dbReference>
<dbReference type="NCBIfam" id="NF008956">
    <property type="entry name" value="PRK12299.1"/>
    <property type="match status" value="1"/>
</dbReference>
<dbReference type="PANTHER" id="PTHR11702">
    <property type="entry name" value="DEVELOPMENTALLY REGULATED GTP-BINDING PROTEIN-RELATED"/>
    <property type="match status" value="1"/>
</dbReference>
<dbReference type="PANTHER" id="PTHR11702:SF31">
    <property type="entry name" value="MITOCHONDRIAL RIBOSOME-ASSOCIATED GTPASE 2"/>
    <property type="match status" value="1"/>
</dbReference>
<dbReference type="Pfam" id="PF01018">
    <property type="entry name" value="GTP1_OBG"/>
    <property type="match status" value="1"/>
</dbReference>
<dbReference type="Pfam" id="PF01926">
    <property type="entry name" value="MMR_HSR1"/>
    <property type="match status" value="1"/>
</dbReference>
<dbReference type="PIRSF" id="PIRSF002401">
    <property type="entry name" value="GTP_bd_Obg/CgtA"/>
    <property type="match status" value="1"/>
</dbReference>
<dbReference type="PRINTS" id="PR00326">
    <property type="entry name" value="GTP1OBG"/>
</dbReference>
<dbReference type="SUPFAM" id="SSF82051">
    <property type="entry name" value="Obg GTP-binding protein N-terminal domain"/>
    <property type="match status" value="1"/>
</dbReference>
<dbReference type="SUPFAM" id="SSF52540">
    <property type="entry name" value="P-loop containing nucleoside triphosphate hydrolases"/>
    <property type="match status" value="1"/>
</dbReference>
<dbReference type="PROSITE" id="PS51710">
    <property type="entry name" value="G_OBG"/>
    <property type="match status" value="1"/>
</dbReference>
<dbReference type="PROSITE" id="PS00905">
    <property type="entry name" value="GTP1_OBG"/>
    <property type="match status" value="1"/>
</dbReference>
<dbReference type="PROSITE" id="PS51883">
    <property type="entry name" value="OBG"/>
    <property type="match status" value="1"/>
</dbReference>